<reference key="1">
    <citation type="journal article" date="2005" name="Nat. Biotechnol.">
        <title>Complete genome sequence of the plant commensal Pseudomonas fluorescens Pf-5.</title>
        <authorList>
            <person name="Paulsen I.T."/>
            <person name="Press C.M."/>
            <person name="Ravel J."/>
            <person name="Kobayashi D.Y."/>
            <person name="Myers G.S.A."/>
            <person name="Mavrodi D.V."/>
            <person name="DeBoy R.T."/>
            <person name="Seshadri R."/>
            <person name="Ren Q."/>
            <person name="Madupu R."/>
            <person name="Dodson R.J."/>
            <person name="Durkin A.S."/>
            <person name="Brinkac L.M."/>
            <person name="Daugherty S.C."/>
            <person name="Sullivan S.A."/>
            <person name="Rosovitz M.J."/>
            <person name="Gwinn M.L."/>
            <person name="Zhou L."/>
            <person name="Schneider D.J."/>
            <person name="Cartinhour S.W."/>
            <person name="Nelson W.C."/>
            <person name="Weidman J."/>
            <person name="Watkins K."/>
            <person name="Tran K."/>
            <person name="Khouri H."/>
            <person name="Pierson E.A."/>
            <person name="Pierson L.S. III"/>
            <person name="Thomashow L.S."/>
            <person name="Loper J.E."/>
        </authorList>
    </citation>
    <scope>NUCLEOTIDE SEQUENCE [LARGE SCALE GENOMIC DNA]</scope>
    <source>
        <strain>ATCC BAA-477 / NRRL B-23932 / Pf-5</strain>
    </source>
</reference>
<proteinExistence type="inferred from homology"/>
<comment type="function">
    <text evidence="1">Catalyzes the condensation of carbamoyl phosphate and aspartate to form carbamoyl aspartate and inorganic phosphate, the committed step in the de novo pyrimidine nucleotide biosynthesis pathway.</text>
</comment>
<comment type="catalytic activity">
    <reaction evidence="1">
        <text>carbamoyl phosphate + L-aspartate = N-carbamoyl-L-aspartate + phosphate + H(+)</text>
        <dbReference type="Rhea" id="RHEA:20013"/>
        <dbReference type="ChEBI" id="CHEBI:15378"/>
        <dbReference type="ChEBI" id="CHEBI:29991"/>
        <dbReference type="ChEBI" id="CHEBI:32814"/>
        <dbReference type="ChEBI" id="CHEBI:43474"/>
        <dbReference type="ChEBI" id="CHEBI:58228"/>
        <dbReference type="EC" id="2.1.3.2"/>
    </reaction>
</comment>
<comment type="pathway">
    <text evidence="1">Pyrimidine metabolism; UMP biosynthesis via de novo pathway; (S)-dihydroorotate from bicarbonate: step 2/3.</text>
</comment>
<comment type="subunit">
    <text evidence="1">Heterododecamer (2C3:3R2) of six catalytic PyrB chains organized as two trimers (C3), and six regulatory PyrI chains organized as three dimers (R2).</text>
</comment>
<comment type="similarity">
    <text evidence="1">Belongs to the aspartate/ornithine carbamoyltransferase superfamily. ATCase family.</text>
</comment>
<gene>
    <name evidence="1" type="primary">pyrB</name>
    <name type="ordered locus">PFL_5833</name>
</gene>
<accession>Q4K4E2</accession>
<keyword id="KW-0665">Pyrimidine biosynthesis</keyword>
<keyword id="KW-0808">Transferase</keyword>
<sequence>MTPLDAKRPLQLNDQGQLRHFLSLDGLNRELLTEILDTADSFLEVGARAVKKVPLLRGKTVCNVFFENSTRTRTTFELAAQRLSADVITLNVSTSSASKGETLLDTLRNLEAMAADMFVVRHGDSGAAHFIAEHVCPQVAIINGGDGRHAHPTQGMLDMLTIRRHKGGFENLSVAIVGDILHSRVARSNMLALKTLGCPDIRVIAPKTLLPIGIEQYGVKVYTDMTEGLKDVDVVIMLRLQRERMQGGLLPSEGEFYRLFGLTTARLAGAKPDAIVMHPGPINRGVEIESAVADGPHSVILNQVTYGIAVRMAVLSMAMSGQTAQRQFEQENAQ</sequence>
<organism>
    <name type="scientific">Pseudomonas fluorescens (strain ATCC BAA-477 / NRRL B-23932 / Pf-5)</name>
    <dbReference type="NCBI Taxonomy" id="220664"/>
    <lineage>
        <taxon>Bacteria</taxon>
        <taxon>Pseudomonadati</taxon>
        <taxon>Pseudomonadota</taxon>
        <taxon>Gammaproteobacteria</taxon>
        <taxon>Pseudomonadales</taxon>
        <taxon>Pseudomonadaceae</taxon>
        <taxon>Pseudomonas</taxon>
    </lineage>
</organism>
<dbReference type="EC" id="2.1.3.2" evidence="1"/>
<dbReference type="EMBL" id="CP000076">
    <property type="protein sequence ID" value="AAY95023.1"/>
    <property type="molecule type" value="Genomic_DNA"/>
</dbReference>
<dbReference type="RefSeq" id="WP_011064007.1">
    <property type="nucleotide sequence ID" value="NC_004129.6"/>
</dbReference>
<dbReference type="SMR" id="Q4K4E2"/>
<dbReference type="STRING" id="220664.PFL_5833"/>
<dbReference type="KEGG" id="pfl:PFL_5833"/>
<dbReference type="eggNOG" id="COG0540">
    <property type="taxonomic scope" value="Bacteria"/>
</dbReference>
<dbReference type="HOGENOM" id="CLU_043846_2_0_6"/>
<dbReference type="UniPathway" id="UPA00070">
    <property type="reaction ID" value="UER00116"/>
</dbReference>
<dbReference type="Proteomes" id="UP000008540">
    <property type="component" value="Chromosome"/>
</dbReference>
<dbReference type="GO" id="GO:0005829">
    <property type="term" value="C:cytosol"/>
    <property type="evidence" value="ECO:0007669"/>
    <property type="project" value="TreeGrafter"/>
</dbReference>
<dbReference type="GO" id="GO:0016597">
    <property type="term" value="F:amino acid binding"/>
    <property type="evidence" value="ECO:0007669"/>
    <property type="project" value="InterPro"/>
</dbReference>
<dbReference type="GO" id="GO:0004070">
    <property type="term" value="F:aspartate carbamoyltransferase activity"/>
    <property type="evidence" value="ECO:0007669"/>
    <property type="project" value="UniProtKB-UniRule"/>
</dbReference>
<dbReference type="GO" id="GO:0006207">
    <property type="term" value="P:'de novo' pyrimidine nucleobase biosynthetic process"/>
    <property type="evidence" value="ECO:0007669"/>
    <property type="project" value="InterPro"/>
</dbReference>
<dbReference type="GO" id="GO:0044205">
    <property type="term" value="P:'de novo' UMP biosynthetic process"/>
    <property type="evidence" value="ECO:0007669"/>
    <property type="project" value="UniProtKB-UniRule"/>
</dbReference>
<dbReference type="GO" id="GO:0006520">
    <property type="term" value="P:amino acid metabolic process"/>
    <property type="evidence" value="ECO:0007669"/>
    <property type="project" value="InterPro"/>
</dbReference>
<dbReference type="FunFam" id="3.40.50.1370:FF:000006">
    <property type="entry name" value="Aspartate carbamoyltransferase"/>
    <property type="match status" value="1"/>
</dbReference>
<dbReference type="Gene3D" id="3.40.50.1370">
    <property type="entry name" value="Aspartate/ornithine carbamoyltransferase"/>
    <property type="match status" value="2"/>
</dbReference>
<dbReference type="HAMAP" id="MF_00001">
    <property type="entry name" value="Asp_carb_tr"/>
    <property type="match status" value="1"/>
</dbReference>
<dbReference type="InterPro" id="IPR006132">
    <property type="entry name" value="Asp/Orn_carbamoyltranf_P-bd"/>
</dbReference>
<dbReference type="InterPro" id="IPR006130">
    <property type="entry name" value="Asp/Orn_carbamoylTrfase"/>
</dbReference>
<dbReference type="InterPro" id="IPR036901">
    <property type="entry name" value="Asp/Orn_carbamoylTrfase_sf"/>
</dbReference>
<dbReference type="InterPro" id="IPR002082">
    <property type="entry name" value="Asp_carbamoyltransf"/>
</dbReference>
<dbReference type="InterPro" id="IPR006131">
    <property type="entry name" value="Asp_carbamoyltransf_Asp/Orn-bd"/>
</dbReference>
<dbReference type="NCBIfam" id="TIGR00670">
    <property type="entry name" value="asp_carb_tr"/>
    <property type="match status" value="1"/>
</dbReference>
<dbReference type="NCBIfam" id="NF002032">
    <property type="entry name" value="PRK00856.1"/>
    <property type="match status" value="1"/>
</dbReference>
<dbReference type="PANTHER" id="PTHR45753:SF6">
    <property type="entry name" value="ASPARTATE CARBAMOYLTRANSFERASE"/>
    <property type="match status" value="1"/>
</dbReference>
<dbReference type="PANTHER" id="PTHR45753">
    <property type="entry name" value="ORNITHINE CARBAMOYLTRANSFERASE, MITOCHONDRIAL"/>
    <property type="match status" value="1"/>
</dbReference>
<dbReference type="Pfam" id="PF00185">
    <property type="entry name" value="OTCace"/>
    <property type="match status" value="1"/>
</dbReference>
<dbReference type="Pfam" id="PF02729">
    <property type="entry name" value="OTCace_N"/>
    <property type="match status" value="1"/>
</dbReference>
<dbReference type="PRINTS" id="PR00100">
    <property type="entry name" value="AOTCASE"/>
</dbReference>
<dbReference type="PRINTS" id="PR00101">
    <property type="entry name" value="ATCASE"/>
</dbReference>
<dbReference type="SUPFAM" id="SSF53671">
    <property type="entry name" value="Aspartate/ornithine carbamoyltransferase"/>
    <property type="match status" value="1"/>
</dbReference>
<dbReference type="PROSITE" id="PS00097">
    <property type="entry name" value="CARBAMOYLTRANSFERASE"/>
    <property type="match status" value="1"/>
</dbReference>
<name>PYRB_PSEF5</name>
<feature type="chain" id="PRO_0000321138" description="Aspartate carbamoyltransferase catalytic subunit">
    <location>
        <begin position="1"/>
        <end position="334"/>
    </location>
</feature>
<feature type="binding site" evidence="1">
    <location>
        <position position="71"/>
    </location>
    <ligand>
        <name>carbamoyl phosphate</name>
        <dbReference type="ChEBI" id="CHEBI:58228"/>
    </ligand>
</feature>
<feature type="binding site" evidence="1">
    <location>
        <position position="72"/>
    </location>
    <ligand>
        <name>carbamoyl phosphate</name>
        <dbReference type="ChEBI" id="CHEBI:58228"/>
    </ligand>
</feature>
<feature type="binding site" evidence="1">
    <location>
        <position position="99"/>
    </location>
    <ligand>
        <name>L-aspartate</name>
        <dbReference type="ChEBI" id="CHEBI:29991"/>
    </ligand>
</feature>
<feature type="binding site" evidence="1">
    <location>
        <position position="121"/>
    </location>
    <ligand>
        <name>carbamoyl phosphate</name>
        <dbReference type="ChEBI" id="CHEBI:58228"/>
    </ligand>
</feature>
<feature type="binding site" evidence="1">
    <location>
        <position position="151"/>
    </location>
    <ligand>
        <name>carbamoyl phosphate</name>
        <dbReference type="ChEBI" id="CHEBI:58228"/>
    </ligand>
</feature>
<feature type="binding site" evidence="1">
    <location>
        <position position="154"/>
    </location>
    <ligand>
        <name>carbamoyl phosphate</name>
        <dbReference type="ChEBI" id="CHEBI:58228"/>
    </ligand>
</feature>
<feature type="binding site" evidence="1">
    <location>
        <position position="184"/>
    </location>
    <ligand>
        <name>L-aspartate</name>
        <dbReference type="ChEBI" id="CHEBI:29991"/>
    </ligand>
</feature>
<feature type="binding site" evidence="1">
    <location>
        <position position="239"/>
    </location>
    <ligand>
        <name>L-aspartate</name>
        <dbReference type="ChEBI" id="CHEBI:29991"/>
    </ligand>
</feature>
<feature type="binding site" evidence="1">
    <location>
        <position position="280"/>
    </location>
    <ligand>
        <name>carbamoyl phosphate</name>
        <dbReference type="ChEBI" id="CHEBI:58228"/>
    </ligand>
</feature>
<feature type="binding site" evidence="1">
    <location>
        <position position="281"/>
    </location>
    <ligand>
        <name>carbamoyl phosphate</name>
        <dbReference type="ChEBI" id="CHEBI:58228"/>
    </ligand>
</feature>
<protein>
    <recommendedName>
        <fullName evidence="1">Aspartate carbamoyltransferase catalytic subunit</fullName>
        <ecNumber evidence="1">2.1.3.2</ecNumber>
    </recommendedName>
    <alternativeName>
        <fullName evidence="1">Aspartate transcarbamylase</fullName>
        <shortName evidence="1">ATCase</shortName>
    </alternativeName>
</protein>
<evidence type="ECO:0000255" key="1">
    <source>
        <dbReference type="HAMAP-Rule" id="MF_00001"/>
    </source>
</evidence>